<keyword id="KW-1185">Reference proteome</keyword>
<dbReference type="EMBL" id="AF306496">
    <property type="protein sequence ID" value="AAG45345.1"/>
    <property type="molecule type" value="Genomic_DNA"/>
</dbReference>
<dbReference type="RefSeq" id="NP_073543.1">
    <property type="nucleotide sequence ID" value="NC_002643.1"/>
</dbReference>
<dbReference type="KEGG" id="vg:918752"/>
<dbReference type="Proteomes" id="UP000002418">
    <property type="component" value="Genome"/>
</dbReference>
<feature type="chain" id="PRO_0000372061" description="Uncharacterized protein W">
    <location>
        <begin position="1"/>
        <end position="51"/>
    </location>
</feature>
<feature type="region of interest" description="Disordered" evidence="1">
    <location>
        <begin position="1"/>
        <end position="51"/>
    </location>
</feature>
<feature type="compositionally biased region" description="Low complexity" evidence="1">
    <location>
        <begin position="19"/>
        <end position="36"/>
    </location>
</feature>
<organismHost>
    <name type="scientific">Bdellovibrio bacteriovorus</name>
    <dbReference type="NCBI Taxonomy" id="959"/>
</organismHost>
<sequence>MARTNVKLCPPKRSKRPSNSRSKSTSHSNRRSLNSLRRTRTSRRSNNGKFT</sequence>
<reference key="1">
    <citation type="journal article" date="2002" name="J. Bacteriol.">
        <title>Microviridae, a family divided: isolation, characterization, and genome sequence of phiMH2K, a bacteriophage of the obligate intracellular parasitic bacterium Bdellovibrio bacteriovorus.</title>
        <authorList>
            <person name="Brentlinger K.L."/>
            <person name="Hafenstein S."/>
            <person name="Novak C.R."/>
            <person name="Fane B.A."/>
            <person name="Borgon R."/>
            <person name="McKenna R."/>
            <person name="Agbandje-McKenna M."/>
        </authorList>
    </citation>
    <scope>NUCLEOTIDE SEQUENCE [GENOMIC DNA]</scope>
</reference>
<accession>Q9G054</accession>
<protein>
    <recommendedName>
        <fullName>Uncharacterized protein W</fullName>
    </recommendedName>
</protein>
<organism>
    <name type="scientific">Bdellovibrio phage phiMH2K</name>
    <name type="common">Bacteriophage phiMH2K</name>
    <dbReference type="NCBI Taxonomy" id="145579"/>
    <lineage>
        <taxon>Viruses</taxon>
        <taxon>Monodnaviria</taxon>
        <taxon>Sangervirae</taxon>
        <taxon>Phixviricota</taxon>
        <taxon>Malgrandaviricetes</taxon>
        <taxon>Petitvirales</taxon>
        <taxon>Microviridae</taxon>
        <taxon>Gokushovirinae</taxon>
        <taxon>Bdellomicrovirus</taxon>
        <taxon>Bdellomicrovirus MH2K</taxon>
    </lineage>
</organism>
<gene>
    <name type="ORF">ORFW</name>
</gene>
<proteinExistence type="predicted"/>
<name>W_BPPHM</name>
<evidence type="ECO:0000256" key="1">
    <source>
        <dbReference type="SAM" id="MobiDB-lite"/>
    </source>
</evidence>